<comment type="function">
    <text evidence="1">Involved in disulfide-bond formation. Acts by transferring its disulfide bond to other proteins (By similarity).</text>
</comment>
<comment type="similarity">
    <text evidence="3">Belongs to the thioredoxin family. DsbA subfamily.</text>
</comment>
<gene>
    <name type="primary">dsbA</name>
    <name type="ordered locus">BU430</name>
</gene>
<organism>
    <name type="scientific">Buchnera aphidicola subsp. Acyrthosiphon pisum (strain APS)</name>
    <name type="common">Acyrthosiphon pisum symbiotic bacterium</name>
    <dbReference type="NCBI Taxonomy" id="107806"/>
    <lineage>
        <taxon>Bacteria</taxon>
        <taxon>Pseudomonadati</taxon>
        <taxon>Pseudomonadota</taxon>
        <taxon>Gammaproteobacteria</taxon>
        <taxon>Enterobacterales</taxon>
        <taxon>Erwiniaceae</taxon>
        <taxon>Buchnera</taxon>
    </lineage>
</organism>
<proteinExistence type="inferred from homology"/>
<keyword id="KW-1015">Disulfide bond</keyword>
<keyword id="KW-0676">Redox-active center</keyword>
<keyword id="KW-1185">Reference proteome</keyword>
<keyword id="KW-0732">Signal</keyword>
<evidence type="ECO:0000250" key="1"/>
<evidence type="ECO:0000255" key="2"/>
<evidence type="ECO:0000305" key="3"/>
<dbReference type="EMBL" id="BA000003">
    <property type="protein sequence ID" value="BAB13128.1"/>
    <property type="molecule type" value="Genomic_DNA"/>
</dbReference>
<dbReference type="RefSeq" id="NP_240242.1">
    <property type="nucleotide sequence ID" value="NC_002528.1"/>
</dbReference>
<dbReference type="RefSeq" id="WP_009874383.1">
    <property type="nucleotide sequence ID" value="NZ_AP036055.1"/>
</dbReference>
<dbReference type="SMR" id="P57505"/>
<dbReference type="STRING" id="563178.BUAP5A_423"/>
<dbReference type="EnsemblBacteria" id="BAB13128">
    <property type="protein sequence ID" value="BAB13128"/>
    <property type="gene ID" value="BAB13128"/>
</dbReference>
<dbReference type="KEGG" id="buc:BU430"/>
<dbReference type="PATRIC" id="fig|107806.10.peg.439"/>
<dbReference type="eggNOG" id="COG1651">
    <property type="taxonomic scope" value="Bacteria"/>
</dbReference>
<dbReference type="HOGENOM" id="CLU_088255_3_0_6"/>
<dbReference type="Proteomes" id="UP000001806">
    <property type="component" value="Chromosome"/>
</dbReference>
<dbReference type="GO" id="GO:0016491">
    <property type="term" value="F:oxidoreductase activity"/>
    <property type="evidence" value="ECO:0007669"/>
    <property type="project" value="InterPro"/>
</dbReference>
<dbReference type="CDD" id="cd03019">
    <property type="entry name" value="DsbA_DsbA"/>
    <property type="match status" value="1"/>
</dbReference>
<dbReference type="Gene3D" id="3.40.30.10">
    <property type="entry name" value="Glutaredoxin"/>
    <property type="match status" value="1"/>
</dbReference>
<dbReference type="InterPro" id="IPR001853">
    <property type="entry name" value="DSBA-like_thioredoxin_dom"/>
</dbReference>
<dbReference type="InterPro" id="IPR023205">
    <property type="entry name" value="DsbA/DsbL"/>
</dbReference>
<dbReference type="InterPro" id="IPR050824">
    <property type="entry name" value="Thiol_disulfide_DsbA"/>
</dbReference>
<dbReference type="InterPro" id="IPR036249">
    <property type="entry name" value="Thioredoxin-like_sf"/>
</dbReference>
<dbReference type="InterPro" id="IPR017937">
    <property type="entry name" value="Thioredoxin_CS"/>
</dbReference>
<dbReference type="PANTHER" id="PTHR35891">
    <property type="entry name" value="THIOL:DISULFIDE INTERCHANGE PROTEIN DSBA"/>
    <property type="match status" value="1"/>
</dbReference>
<dbReference type="PANTHER" id="PTHR35891:SF2">
    <property type="entry name" value="THIOL:DISULFIDE INTERCHANGE PROTEIN DSBA"/>
    <property type="match status" value="1"/>
</dbReference>
<dbReference type="Pfam" id="PF01323">
    <property type="entry name" value="DSBA"/>
    <property type="match status" value="1"/>
</dbReference>
<dbReference type="PIRSF" id="PIRSF001488">
    <property type="entry name" value="Tdi_protein"/>
    <property type="match status" value="1"/>
</dbReference>
<dbReference type="SUPFAM" id="SSF52833">
    <property type="entry name" value="Thioredoxin-like"/>
    <property type="match status" value="1"/>
</dbReference>
<dbReference type="PROSITE" id="PS00194">
    <property type="entry name" value="THIOREDOXIN_1"/>
    <property type="match status" value="1"/>
</dbReference>
<name>DSBA_BUCAI</name>
<protein>
    <recommendedName>
        <fullName>Thiol:disulfide interchange protein DsbA</fullName>
    </recommendedName>
</protein>
<reference key="1">
    <citation type="journal article" date="2000" name="Nature">
        <title>Genome sequence of the endocellular bacterial symbiont of aphids Buchnera sp. APS.</title>
        <authorList>
            <person name="Shigenobu S."/>
            <person name="Watanabe H."/>
            <person name="Hattori M."/>
            <person name="Sakaki Y."/>
            <person name="Ishikawa H."/>
        </authorList>
    </citation>
    <scope>NUCLEOTIDE SEQUENCE [LARGE SCALE GENOMIC DNA]</scope>
    <source>
        <strain>APS</strain>
    </source>
</reference>
<feature type="signal peptide" evidence="2">
    <location>
        <begin position="1"/>
        <end position="19"/>
    </location>
</feature>
<feature type="chain" id="PRO_0000034248" description="Thiol:disulfide interchange protein DsbA">
    <location>
        <begin position="20"/>
        <end position="212"/>
    </location>
</feature>
<feature type="disulfide bond" description="Redox-active" evidence="1">
    <location>
        <begin position="49"/>
        <end position="52"/>
    </location>
</feature>
<accession>P57505</accession>
<sequence>MKKILIILCILILSCNVFSCEFKNGREYTEKHKVISNIPSIIEFFSFFCPYCYEFEKTYDTQYLIEKKIKKNINIQKYHVSFLGGKLGYVLTKSWIIAQQMGIEKKIVLPIFKGIQETYTINNLDDIKKIFKEKAGVSESKFNSFWNSLTIKILISKQEEDIRKYNLKNIPTMLINEKYVIDYSKIEEIFKDSFAEKYTKLIQFLINKKEKI</sequence>